<gene>
    <name evidence="1" type="primary">panB</name>
    <name type="ordered locus">Sputcn32_3132</name>
</gene>
<comment type="function">
    <text evidence="1">Catalyzes the reversible reaction in which hydroxymethyl group from 5,10-methylenetetrahydrofolate is transferred onto alpha-ketoisovalerate to form ketopantoate.</text>
</comment>
<comment type="catalytic activity">
    <reaction evidence="1">
        <text>3-methyl-2-oxobutanoate + (6R)-5,10-methylene-5,6,7,8-tetrahydrofolate + H2O = 2-dehydropantoate + (6S)-5,6,7,8-tetrahydrofolate</text>
        <dbReference type="Rhea" id="RHEA:11824"/>
        <dbReference type="ChEBI" id="CHEBI:11561"/>
        <dbReference type="ChEBI" id="CHEBI:11851"/>
        <dbReference type="ChEBI" id="CHEBI:15377"/>
        <dbReference type="ChEBI" id="CHEBI:15636"/>
        <dbReference type="ChEBI" id="CHEBI:57453"/>
        <dbReference type="EC" id="2.1.2.11"/>
    </reaction>
</comment>
<comment type="cofactor">
    <cofactor evidence="1">
        <name>Mg(2+)</name>
        <dbReference type="ChEBI" id="CHEBI:18420"/>
    </cofactor>
    <text evidence="1">Binds 1 Mg(2+) ion per subunit.</text>
</comment>
<comment type="pathway">
    <text evidence="1">Cofactor biosynthesis; (R)-pantothenate biosynthesis; (R)-pantoate from 3-methyl-2-oxobutanoate: step 1/2.</text>
</comment>
<comment type="subunit">
    <text evidence="1">Homodecamer; pentamer of dimers.</text>
</comment>
<comment type="subcellular location">
    <subcellularLocation>
        <location evidence="1">Cytoplasm</location>
    </subcellularLocation>
</comment>
<comment type="similarity">
    <text evidence="1">Belongs to the PanB family.</text>
</comment>
<proteinExistence type="inferred from homology"/>
<evidence type="ECO:0000255" key="1">
    <source>
        <dbReference type="HAMAP-Rule" id="MF_00156"/>
    </source>
</evidence>
<name>PANB_SHEPC</name>
<organism>
    <name type="scientific">Shewanella putrefaciens (strain CN-32 / ATCC BAA-453)</name>
    <dbReference type="NCBI Taxonomy" id="319224"/>
    <lineage>
        <taxon>Bacteria</taxon>
        <taxon>Pseudomonadati</taxon>
        <taxon>Pseudomonadota</taxon>
        <taxon>Gammaproteobacteria</taxon>
        <taxon>Alteromonadales</taxon>
        <taxon>Shewanellaceae</taxon>
        <taxon>Shewanella</taxon>
    </lineage>
</organism>
<accession>A4YA61</accession>
<dbReference type="EC" id="2.1.2.11" evidence="1"/>
<dbReference type="EMBL" id="CP000681">
    <property type="protein sequence ID" value="ABP76844.1"/>
    <property type="molecule type" value="Genomic_DNA"/>
</dbReference>
<dbReference type="SMR" id="A4YA61"/>
<dbReference type="STRING" id="319224.Sputcn32_3132"/>
<dbReference type="KEGG" id="spc:Sputcn32_3132"/>
<dbReference type="eggNOG" id="COG0413">
    <property type="taxonomic scope" value="Bacteria"/>
</dbReference>
<dbReference type="HOGENOM" id="CLU_036645_1_0_6"/>
<dbReference type="UniPathway" id="UPA00028">
    <property type="reaction ID" value="UER00003"/>
</dbReference>
<dbReference type="GO" id="GO:0005737">
    <property type="term" value="C:cytoplasm"/>
    <property type="evidence" value="ECO:0007669"/>
    <property type="project" value="UniProtKB-SubCell"/>
</dbReference>
<dbReference type="GO" id="GO:0003864">
    <property type="term" value="F:3-methyl-2-oxobutanoate hydroxymethyltransferase activity"/>
    <property type="evidence" value="ECO:0007669"/>
    <property type="project" value="UniProtKB-UniRule"/>
</dbReference>
<dbReference type="GO" id="GO:0000287">
    <property type="term" value="F:magnesium ion binding"/>
    <property type="evidence" value="ECO:0007669"/>
    <property type="project" value="TreeGrafter"/>
</dbReference>
<dbReference type="GO" id="GO:0015940">
    <property type="term" value="P:pantothenate biosynthetic process"/>
    <property type="evidence" value="ECO:0007669"/>
    <property type="project" value="UniProtKB-UniRule"/>
</dbReference>
<dbReference type="CDD" id="cd06557">
    <property type="entry name" value="KPHMT-like"/>
    <property type="match status" value="1"/>
</dbReference>
<dbReference type="FunFam" id="3.20.20.60:FF:000003">
    <property type="entry name" value="3-methyl-2-oxobutanoate hydroxymethyltransferase"/>
    <property type="match status" value="1"/>
</dbReference>
<dbReference type="Gene3D" id="3.20.20.60">
    <property type="entry name" value="Phosphoenolpyruvate-binding domains"/>
    <property type="match status" value="1"/>
</dbReference>
<dbReference type="HAMAP" id="MF_00156">
    <property type="entry name" value="PanB"/>
    <property type="match status" value="1"/>
</dbReference>
<dbReference type="InterPro" id="IPR003700">
    <property type="entry name" value="Pantoate_hydroxy_MeTrfase"/>
</dbReference>
<dbReference type="InterPro" id="IPR015813">
    <property type="entry name" value="Pyrv/PenolPyrv_kinase-like_dom"/>
</dbReference>
<dbReference type="InterPro" id="IPR040442">
    <property type="entry name" value="Pyrv_kinase-like_dom_sf"/>
</dbReference>
<dbReference type="NCBIfam" id="TIGR00222">
    <property type="entry name" value="panB"/>
    <property type="match status" value="1"/>
</dbReference>
<dbReference type="NCBIfam" id="NF001452">
    <property type="entry name" value="PRK00311.1"/>
    <property type="match status" value="1"/>
</dbReference>
<dbReference type="PANTHER" id="PTHR20881">
    <property type="entry name" value="3-METHYL-2-OXOBUTANOATE HYDROXYMETHYLTRANSFERASE"/>
    <property type="match status" value="1"/>
</dbReference>
<dbReference type="PANTHER" id="PTHR20881:SF0">
    <property type="entry name" value="3-METHYL-2-OXOBUTANOATE HYDROXYMETHYLTRANSFERASE"/>
    <property type="match status" value="1"/>
</dbReference>
<dbReference type="Pfam" id="PF02548">
    <property type="entry name" value="Pantoate_transf"/>
    <property type="match status" value="1"/>
</dbReference>
<dbReference type="PIRSF" id="PIRSF000388">
    <property type="entry name" value="Pantoate_hydroxy_MeTrfase"/>
    <property type="match status" value="1"/>
</dbReference>
<dbReference type="SUPFAM" id="SSF51621">
    <property type="entry name" value="Phosphoenolpyruvate/pyruvate domain"/>
    <property type="match status" value="1"/>
</dbReference>
<sequence length="264" mass="28167">MSKITSSTLLKYKQEGRKFTALTAYDASFAGAFDSEGVDVLLVGDSLGMVLQGHDDTLPVTTAEIAYHTRCVRRGIERALLIADMPFMSYATPEQAMINATELMQAGANMVKVEGGHWLLETVTKLTERGIPVCAHLGLTPQSVHVFGGFKVQGRDAENAQRILDEAKALEAAGAQLLVVECIPAPLATAITQALTIPVIGIGAGASTDGQILVMHDVLGISSGYIPRFSKNYLKQTGEIRSAVRAYIEEVAAGTFPSAEHTFS</sequence>
<protein>
    <recommendedName>
        <fullName evidence="1">3-methyl-2-oxobutanoate hydroxymethyltransferase</fullName>
        <ecNumber evidence="1">2.1.2.11</ecNumber>
    </recommendedName>
    <alternativeName>
        <fullName evidence="1">Ketopantoate hydroxymethyltransferase</fullName>
        <shortName evidence="1">KPHMT</shortName>
    </alternativeName>
</protein>
<feature type="chain" id="PRO_1000011379" description="3-methyl-2-oxobutanoate hydroxymethyltransferase">
    <location>
        <begin position="1"/>
        <end position="264"/>
    </location>
</feature>
<feature type="active site" description="Proton acceptor" evidence="1">
    <location>
        <position position="181"/>
    </location>
</feature>
<feature type="binding site" evidence="1">
    <location>
        <begin position="45"/>
        <end position="46"/>
    </location>
    <ligand>
        <name>3-methyl-2-oxobutanoate</name>
        <dbReference type="ChEBI" id="CHEBI:11851"/>
    </ligand>
</feature>
<feature type="binding site" evidence="1">
    <location>
        <position position="45"/>
    </location>
    <ligand>
        <name>Mg(2+)</name>
        <dbReference type="ChEBI" id="CHEBI:18420"/>
    </ligand>
</feature>
<feature type="binding site" evidence="1">
    <location>
        <position position="84"/>
    </location>
    <ligand>
        <name>3-methyl-2-oxobutanoate</name>
        <dbReference type="ChEBI" id="CHEBI:11851"/>
    </ligand>
</feature>
<feature type="binding site" evidence="1">
    <location>
        <position position="84"/>
    </location>
    <ligand>
        <name>Mg(2+)</name>
        <dbReference type="ChEBI" id="CHEBI:18420"/>
    </ligand>
</feature>
<feature type="binding site" evidence="1">
    <location>
        <position position="112"/>
    </location>
    <ligand>
        <name>3-methyl-2-oxobutanoate</name>
        <dbReference type="ChEBI" id="CHEBI:11851"/>
    </ligand>
</feature>
<feature type="binding site" evidence="1">
    <location>
        <position position="114"/>
    </location>
    <ligand>
        <name>Mg(2+)</name>
        <dbReference type="ChEBI" id="CHEBI:18420"/>
    </ligand>
</feature>
<keyword id="KW-0963">Cytoplasm</keyword>
<keyword id="KW-0460">Magnesium</keyword>
<keyword id="KW-0479">Metal-binding</keyword>
<keyword id="KW-0566">Pantothenate biosynthesis</keyword>
<keyword id="KW-0808">Transferase</keyword>
<reference key="1">
    <citation type="submission" date="2007-04" db="EMBL/GenBank/DDBJ databases">
        <title>Complete sequence of Shewanella putrefaciens CN-32.</title>
        <authorList>
            <consortium name="US DOE Joint Genome Institute"/>
            <person name="Copeland A."/>
            <person name="Lucas S."/>
            <person name="Lapidus A."/>
            <person name="Barry K."/>
            <person name="Detter J.C."/>
            <person name="Glavina del Rio T."/>
            <person name="Hammon N."/>
            <person name="Israni S."/>
            <person name="Dalin E."/>
            <person name="Tice H."/>
            <person name="Pitluck S."/>
            <person name="Chain P."/>
            <person name="Malfatti S."/>
            <person name="Shin M."/>
            <person name="Vergez L."/>
            <person name="Schmutz J."/>
            <person name="Larimer F."/>
            <person name="Land M."/>
            <person name="Hauser L."/>
            <person name="Kyrpides N."/>
            <person name="Mikhailova N."/>
            <person name="Romine M.F."/>
            <person name="Fredrickson J."/>
            <person name="Tiedje J."/>
            <person name="Richardson P."/>
        </authorList>
    </citation>
    <scope>NUCLEOTIDE SEQUENCE [LARGE SCALE GENOMIC DNA]</scope>
    <source>
        <strain>CN-32 / ATCC BAA-453</strain>
    </source>
</reference>